<name>NMDA1_DROGR</name>
<protein>
    <recommendedName>
        <fullName evidence="4">Glutamate [NMDA] receptor subunit 1</fullName>
    </recommendedName>
</protein>
<reference evidence="8" key="1">
    <citation type="journal article" date="2007" name="Nature">
        <title>Evolution of genes and genomes on the Drosophila phylogeny.</title>
        <authorList>
            <consortium name="Drosophila 12 genomes consortium"/>
        </authorList>
    </citation>
    <scope>NUCLEOTIDE SEQUENCE [LARGE SCALE GENOMIC DNA]</scope>
    <source>
        <strain evidence="8">Tucson 15287-2541.00</strain>
    </source>
</reference>
<proteinExistence type="inferred from homology"/>
<dbReference type="EMBL" id="CH916369">
    <property type="protein sequence ID" value="EDV92858.1"/>
    <property type="molecule type" value="Genomic_DNA"/>
</dbReference>
<dbReference type="SMR" id="B4JHV0"/>
<dbReference type="FunCoup" id="B4JHV0">
    <property type="interactions" value="373"/>
</dbReference>
<dbReference type="STRING" id="7222.B4JHV0"/>
<dbReference type="GlyCosmos" id="B4JHV0">
    <property type="glycosylation" value="8 sites, No reported glycans"/>
</dbReference>
<dbReference type="EnsemblMetazoa" id="FBtr0154407">
    <property type="protein sequence ID" value="FBpp0152899"/>
    <property type="gene ID" value="FBgn0126460"/>
</dbReference>
<dbReference type="EnsemblMetazoa" id="XM_001989760.2">
    <property type="protein sequence ID" value="XP_001989796.1"/>
    <property type="gene ID" value="LOC6563892"/>
</dbReference>
<dbReference type="GeneID" id="6563892"/>
<dbReference type="KEGG" id="dgr:6563892"/>
<dbReference type="CTD" id="40665"/>
<dbReference type="eggNOG" id="KOG4440">
    <property type="taxonomic scope" value="Eukaryota"/>
</dbReference>
<dbReference type="HOGENOM" id="CLU_007257_2_0_1"/>
<dbReference type="InParanoid" id="B4JHV0"/>
<dbReference type="OMA" id="FANNTPD"/>
<dbReference type="OrthoDB" id="5984008at2759"/>
<dbReference type="PhylomeDB" id="B4JHV0"/>
<dbReference type="Proteomes" id="UP000001070">
    <property type="component" value="Unassembled WGS sequence"/>
</dbReference>
<dbReference type="GO" id="GO:0017146">
    <property type="term" value="C:NMDA selective glutamate receptor complex"/>
    <property type="evidence" value="ECO:0000250"/>
    <property type="project" value="UniProtKB"/>
</dbReference>
<dbReference type="GO" id="GO:0014069">
    <property type="term" value="C:postsynaptic density"/>
    <property type="evidence" value="ECO:0007669"/>
    <property type="project" value="UniProtKB-SubCell"/>
</dbReference>
<dbReference type="GO" id="GO:0045211">
    <property type="term" value="C:postsynaptic membrane"/>
    <property type="evidence" value="ECO:0000250"/>
    <property type="project" value="UniProtKB"/>
</dbReference>
<dbReference type="GO" id="GO:0004970">
    <property type="term" value="F:glutamate-gated receptor activity"/>
    <property type="evidence" value="ECO:0000250"/>
    <property type="project" value="UniProtKB"/>
</dbReference>
<dbReference type="GO" id="GO:0004972">
    <property type="term" value="F:NMDA glutamate receptor activity"/>
    <property type="evidence" value="ECO:0007669"/>
    <property type="project" value="EnsemblMetazoa"/>
</dbReference>
<dbReference type="GO" id="GO:0048149">
    <property type="term" value="P:behavioral response to ethanol"/>
    <property type="evidence" value="ECO:0007669"/>
    <property type="project" value="EnsemblMetazoa"/>
</dbReference>
<dbReference type="GO" id="GO:0055074">
    <property type="term" value="P:calcium ion homeostasis"/>
    <property type="evidence" value="ECO:0000250"/>
    <property type="project" value="UniProtKB"/>
</dbReference>
<dbReference type="GO" id="GO:0007268">
    <property type="term" value="P:chemical synaptic transmission"/>
    <property type="evidence" value="ECO:0000250"/>
    <property type="project" value="UniProtKB"/>
</dbReference>
<dbReference type="GO" id="GO:0035235">
    <property type="term" value="P:ionotropic glutamate receptor signaling pathway"/>
    <property type="evidence" value="ECO:0000250"/>
    <property type="project" value="UniProtKB"/>
</dbReference>
<dbReference type="GO" id="GO:0007616">
    <property type="term" value="P:long-term memory"/>
    <property type="evidence" value="ECO:0000250"/>
    <property type="project" value="UniProtKB"/>
</dbReference>
<dbReference type="GO" id="GO:0072375">
    <property type="term" value="P:medium-term memory"/>
    <property type="evidence" value="ECO:0007669"/>
    <property type="project" value="EnsemblMetazoa"/>
</dbReference>
<dbReference type="GO" id="GO:0008355">
    <property type="term" value="P:olfactory learning"/>
    <property type="evidence" value="ECO:0000250"/>
    <property type="project" value="UniProtKB"/>
</dbReference>
<dbReference type="GO" id="GO:0042331">
    <property type="term" value="P:phototaxis"/>
    <property type="evidence" value="ECO:0007669"/>
    <property type="project" value="EnsemblMetazoa"/>
</dbReference>
<dbReference type="GO" id="GO:0042391">
    <property type="term" value="P:regulation of membrane potential"/>
    <property type="evidence" value="ECO:0000250"/>
    <property type="project" value="UniProtKB"/>
</dbReference>
<dbReference type="GO" id="GO:0050975">
    <property type="term" value="P:sensory perception of touch"/>
    <property type="evidence" value="ECO:0007669"/>
    <property type="project" value="EnsemblMetazoa"/>
</dbReference>
<dbReference type="CDD" id="cd06379">
    <property type="entry name" value="PBP1_iGluR_NMDA_NR1"/>
    <property type="match status" value="1"/>
</dbReference>
<dbReference type="CDD" id="cd13719">
    <property type="entry name" value="PBP2_iGluR_NMDA_Nr1"/>
    <property type="match status" value="1"/>
</dbReference>
<dbReference type="FunFam" id="3.40.190.10:FF:000177">
    <property type="entry name" value="Glutamate [NMDA] receptor subunit 1"/>
    <property type="match status" value="1"/>
</dbReference>
<dbReference type="FunFam" id="3.40.50.2300:FF:000266">
    <property type="entry name" value="Glutamate [NMDA] receptor subunit 1"/>
    <property type="match status" value="1"/>
</dbReference>
<dbReference type="FunFam" id="3.40.190.10:FF:000010">
    <property type="entry name" value="glutamate receptor ionotropic, NMDA 1 isoform X1"/>
    <property type="match status" value="1"/>
</dbReference>
<dbReference type="FunFam" id="3.40.50.2300:FF:000025">
    <property type="entry name" value="glutamate receptor ionotropic, NMDA 1 isoform X1"/>
    <property type="match status" value="1"/>
</dbReference>
<dbReference type="Gene3D" id="1.10.287.70">
    <property type="match status" value="1"/>
</dbReference>
<dbReference type="Gene3D" id="3.40.50.2300">
    <property type="match status" value="2"/>
</dbReference>
<dbReference type="Gene3D" id="3.40.190.10">
    <property type="entry name" value="Periplasmic binding protein-like II"/>
    <property type="match status" value="2"/>
</dbReference>
<dbReference type="InterPro" id="IPR001828">
    <property type="entry name" value="ANF_lig-bd_rcpt"/>
</dbReference>
<dbReference type="InterPro" id="IPR018882">
    <property type="entry name" value="CaM-bd_C0_NMDA_rcpt_NR1"/>
</dbReference>
<dbReference type="InterPro" id="IPR019594">
    <property type="entry name" value="Glu/Gly-bd"/>
</dbReference>
<dbReference type="InterPro" id="IPR001508">
    <property type="entry name" value="Iono_Glu_rcpt_met"/>
</dbReference>
<dbReference type="InterPro" id="IPR015683">
    <property type="entry name" value="Ionotropic_Glu_rcpt"/>
</dbReference>
<dbReference type="InterPro" id="IPR001320">
    <property type="entry name" value="Iontro_rcpt_C"/>
</dbReference>
<dbReference type="InterPro" id="IPR049872">
    <property type="entry name" value="NMDA1-like_ligand-bd"/>
</dbReference>
<dbReference type="InterPro" id="IPR049873">
    <property type="entry name" value="NMDA1-like_N"/>
</dbReference>
<dbReference type="InterPro" id="IPR028082">
    <property type="entry name" value="Peripla_BP_I"/>
</dbReference>
<dbReference type="PANTHER" id="PTHR18966">
    <property type="entry name" value="IONOTROPIC GLUTAMATE RECEPTOR"/>
    <property type="match status" value="1"/>
</dbReference>
<dbReference type="Pfam" id="PF01094">
    <property type="entry name" value="ANF_receptor"/>
    <property type="match status" value="2"/>
</dbReference>
<dbReference type="Pfam" id="PF10562">
    <property type="entry name" value="CaM_bdg_C0"/>
    <property type="match status" value="1"/>
</dbReference>
<dbReference type="Pfam" id="PF00060">
    <property type="entry name" value="Lig_chan"/>
    <property type="match status" value="1"/>
</dbReference>
<dbReference type="Pfam" id="PF10613">
    <property type="entry name" value="Lig_chan-Glu_bd"/>
    <property type="match status" value="1"/>
</dbReference>
<dbReference type="PRINTS" id="PR00177">
    <property type="entry name" value="NMDARECEPTOR"/>
</dbReference>
<dbReference type="SMART" id="SM00918">
    <property type="entry name" value="Lig_chan-Glu_bd"/>
    <property type="match status" value="1"/>
</dbReference>
<dbReference type="SMART" id="SM00079">
    <property type="entry name" value="PBPe"/>
    <property type="match status" value="1"/>
</dbReference>
<dbReference type="SUPFAM" id="SSF53822">
    <property type="entry name" value="Periplasmic binding protein-like I"/>
    <property type="match status" value="1"/>
</dbReference>
<dbReference type="SUPFAM" id="SSF53850">
    <property type="entry name" value="Periplasmic binding protein-like II"/>
    <property type="match status" value="1"/>
</dbReference>
<dbReference type="SUPFAM" id="SSF81324">
    <property type="entry name" value="Voltage-gated potassium channels"/>
    <property type="match status" value="1"/>
</dbReference>
<comment type="function">
    <text evidence="2 4">NMDA receptor subtype of glutamate-gated ion channels with high calcium permeability and voltage-dependent sensitivity to magnesium. Mediated by glycine. This protein plays a key role in synaptic plasticity, synaptogenesis, excitotoxicity, memory acquisition and learning. It mediates neuronal functions in glutamate neurotransmission. Is involved in the cell surface targeting of NMDA receptors. Plays a role in associative learning and in long-term memory consolidation (By similarity).</text>
</comment>
<comment type="subunit">
    <text evidence="1">Forms a heteromeric NMDA channel with Nmdar2.</text>
</comment>
<comment type="subcellular location">
    <subcellularLocation>
        <location evidence="4">Cell membrane</location>
        <topology evidence="4">Multi-pass membrane protein</topology>
    </subcellularLocation>
    <subcellularLocation>
        <location evidence="4">Postsynaptic cell membrane</location>
    </subcellularLocation>
    <subcellularLocation>
        <location evidence="4">Postsynaptic density</location>
    </subcellularLocation>
</comment>
<comment type="similarity">
    <text evidence="7">Belongs to the glutamate-gated ion channel (TC 1.A.10.1) family.</text>
</comment>
<keyword id="KW-0106">Calcium</keyword>
<keyword id="KW-1003">Cell membrane</keyword>
<keyword id="KW-1015">Disulfide bond</keyword>
<keyword id="KW-0325">Glycoprotein</keyword>
<keyword id="KW-0407">Ion channel</keyword>
<keyword id="KW-0406">Ion transport</keyword>
<keyword id="KW-1071">Ligand-gated ion channel</keyword>
<keyword id="KW-0460">Magnesium</keyword>
<keyword id="KW-0472">Membrane</keyword>
<keyword id="KW-0597">Phosphoprotein</keyword>
<keyword id="KW-0628">Postsynaptic cell membrane</keyword>
<keyword id="KW-0675">Receptor</keyword>
<keyword id="KW-1185">Reference proteome</keyword>
<keyword id="KW-0732">Signal</keyword>
<keyword id="KW-0770">Synapse</keyword>
<keyword id="KW-0812">Transmembrane</keyword>
<keyword id="KW-1133">Transmembrane helix</keyword>
<keyword id="KW-0813">Transport</keyword>
<sequence>MRVAFIYRWLLCGAAIVNVLVAQRHTASDNPSTYNIGGVLSNSDSEEHFRTTIAHLNFDQQYVPRKVTYYDKTIRMDKNPIKTVFNVCDKLIEKRVYAVVVSHEQTSGDLSPAAVSYTSGFYSIPVIGISSRDAAFSDKNIHVSFLRTVPPYYHQADVWLEMLSHFLYTKVIIIHSSDTDGRAILGRFQTTSQTYYDDVDVRATVELIVEFEPKLESFTEHLIDMKTAQSRVYLMYASTEDAQVIFRDAGEYNMTGEGHVWIVTEQALHANNTPDGVLGLQLEHAHSDKGHIRDSVYVLASAIKEMISNETIAEAPKDCGDSAVNWESGKRLFQYLKSRNITGETGQVAFDDNGDRIYAGYDVINIREHQKQHVVGKFSYDSPRGKMRMRINDSEIIWGGKQKRKPEGIMIPTHLKLLTIEEKPFVYVRRMGDDEFRCEPDERPCPLFNASGATANEFCCRGYCIDLLIELSKRINFTYDLALSPDGQFGHYILRNNSGAMTLRKEWTGLIGELVNERADMIVAPLTINPERAEYIEFSKPFKYQGITILEKKPSRSSTLVSFLQPFSNTLWILVMVSVHVVALVLYLLDRFSPFGRFKLSHSDSNEEKALNLSSAVWFAWGVLLNSGIGEGTPRSFSARVLGMVWAGFAMIIVASYTANLAAFLVLERPKTKLSGINDARLRNTMENLTCATVKGSSVDMYFRRQVELSNMYRTMESNNYVTAEQAIQDVKKGKLMAFIWDSSRLEYEASKDCELVTAGELFGRSGYGIGLQKGSPWTDAVTLAILEFHESGFMEKLDKQWIFHGHVQQNCELFEKTPNTLGLKNMAGVFILVGVGIAGGVGLIIIEVIYKKHQVKKQKRLDIARHAADKWRGTIEKRKTIRASLAMQRQYNVGLMATHAPGTISLAVDKRRYPRLGQRLGPERAWPGDGADVLRIRRPYDLGKGGLTASQLGLGKTRPQQNPLPPRYSPGYTSDVSHLVV</sequence>
<organism>
    <name type="scientific">Drosophila grimshawi</name>
    <name type="common">Hawaiian fruit fly</name>
    <name type="synonym">Idiomyia grimshawi</name>
    <dbReference type="NCBI Taxonomy" id="7222"/>
    <lineage>
        <taxon>Eukaryota</taxon>
        <taxon>Metazoa</taxon>
        <taxon>Ecdysozoa</taxon>
        <taxon>Arthropoda</taxon>
        <taxon>Hexapoda</taxon>
        <taxon>Insecta</taxon>
        <taxon>Pterygota</taxon>
        <taxon>Neoptera</taxon>
        <taxon>Endopterygota</taxon>
        <taxon>Diptera</taxon>
        <taxon>Brachycera</taxon>
        <taxon>Muscomorpha</taxon>
        <taxon>Ephydroidea</taxon>
        <taxon>Drosophilidae</taxon>
        <taxon>Drosophila</taxon>
        <taxon>Hawaiian Drosophila</taxon>
    </lineage>
</organism>
<accession>B4JHV0</accession>
<evidence type="ECO:0000250" key="1"/>
<evidence type="ECO:0000250" key="2">
    <source>
        <dbReference type="UniProtKB" id="P35439"/>
    </source>
</evidence>
<evidence type="ECO:0000250" key="3">
    <source>
        <dbReference type="UniProtKB" id="Q05586"/>
    </source>
</evidence>
<evidence type="ECO:0000250" key="4">
    <source>
        <dbReference type="UniProtKB" id="Q24418"/>
    </source>
</evidence>
<evidence type="ECO:0000255" key="5"/>
<evidence type="ECO:0000256" key="6">
    <source>
        <dbReference type="SAM" id="MobiDB-lite"/>
    </source>
</evidence>
<evidence type="ECO:0000305" key="7"/>
<evidence type="ECO:0000312" key="8">
    <source>
        <dbReference type="EMBL" id="EDV92858.1"/>
    </source>
</evidence>
<gene>
    <name evidence="4" type="primary">Nmdar1</name>
    <name type="ORF">GH18993</name>
</gene>
<feature type="signal peptide" evidence="5">
    <location>
        <begin position="1"/>
        <end position="22"/>
    </location>
</feature>
<feature type="chain" id="PRO_0000363995" description="Glutamate [NMDA] receptor subunit 1" evidence="5">
    <location>
        <begin position="23"/>
        <end position="982"/>
    </location>
</feature>
<feature type="topological domain" description="Extracellular" evidence="5">
    <location>
        <begin position="23"/>
        <end position="568"/>
    </location>
</feature>
<feature type="transmembrane region" description="Helical" evidence="5">
    <location>
        <begin position="569"/>
        <end position="589"/>
    </location>
</feature>
<feature type="topological domain" description="Cytoplasmic" evidence="5">
    <location>
        <begin position="590"/>
        <end position="646"/>
    </location>
</feature>
<feature type="transmembrane region" description="Helical" evidence="5">
    <location>
        <begin position="647"/>
        <end position="667"/>
    </location>
</feature>
<feature type="topological domain" description="Extracellular" evidence="5">
    <location>
        <begin position="668"/>
        <end position="826"/>
    </location>
</feature>
<feature type="transmembrane region" description="Helical" evidence="5">
    <location>
        <begin position="827"/>
        <end position="847"/>
    </location>
</feature>
<feature type="topological domain" description="Cytoplasmic" evidence="5">
    <location>
        <begin position="848"/>
        <end position="982"/>
    </location>
</feature>
<feature type="region of interest" description="Disordered" evidence="6">
    <location>
        <begin position="948"/>
        <end position="982"/>
    </location>
</feature>
<feature type="compositionally biased region" description="Polar residues" evidence="6">
    <location>
        <begin position="972"/>
        <end position="982"/>
    </location>
</feature>
<feature type="binding site" evidence="2">
    <location>
        <begin position="525"/>
        <end position="527"/>
    </location>
    <ligand>
        <name>glycine</name>
        <dbReference type="ChEBI" id="CHEBI:57305"/>
    </ligand>
</feature>
<feature type="binding site" evidence="2">
    <location>
        <position position="532"/>
    </location>
    <ligand>
        <name>glycine</name>
        <dbReference type="ChEBI" id="CHEBI:57305"/>
    </ligand>
</feature>
<feature type="binding site" evidence="2">
    <location>
        <position position="698"/>
    </location>
    <ligand>
        <name>glycine</name>
        <dbReference type="ChEBI" id="CHEBI:57305"/>
    </ligand>
</feature>
<feature type="binding site" evidence="2">
    <location>
        <position position="742"/>
    </location>
    <ligand>
        <name>glycine</name>
        <dbReference type="ChEBI" id="CHEBI:57305"/>
    </ligand>
</feature>
<feature type="glycosylation site" description="N-linked (GlcNAc...) asparagine" evidence="5">
    <location>
        <position position="253"/>
    </location>
</feature>
<feature type="glycosylation site" description="N-linked (GlcNAc...) asparagine" evidence="5">
    <location>
        <position position="309"/>
    </location>
</feature>
<feature type="glycosylation site" description="N-linked (GlcNAc...) asparagine" evidence="5">
    <location>
        <position position="340"/>
    </location>
</feature>
<feature type="glycosylation site" description="N-linked (GlcNAc...) asparagine" evidence="5">
    <location>
        <position position="392"/>
    </location>
</feature>
<feature type="glycosylation site" description="N-linked (GlcNAc...) asparagine" evidence="5">
    <location>
        <position position="449"/>
    </location>
</feature>
<feature type="glycosylation site" description="N-linked (GlcNAc...) asparagine" evidence="5">
    <location>
        <position position="476"/>
    </location>
</feature>
<feature type="glycosylation site" description="N-linked (GlcNAc...) asparagine" evidence="5">
    <location>
        <position position="496"/>
    </location>
</feature>
<feature type="glycosylation site" description="N-linked (GlcNAc...) asparagine" evidence="5">
    <location>
        <position position="688"/>
    </location>
</feature>
<feature type="disulfide bond" description="Interchain" evidence="3">
    <location>
        <position position="88"/>
    </location>
</feature>